<evidence type="ECO:0000250" key="1"/>
<evidence type="ECO:0000250" key="2">
    <source>
        <dbReference type="UniProtKB" id="A7XY94"/>
    </source>
</evidence>
<evidence type="ECO:0000250" key="3">
    <source>
        <dbReference type="UniProtKB" id="P35438"/>
    </source>
</evidence>
<evidence type="ECO:0000250" key="4">
    <source>
        <dbReference type="UniProtKB" id="Q00960"/>
    </source>
</evidence>
<evidence type="ECO:0000250" key="5">
    <source>
        <dbReference type="UniProtKB" id="Q01097"/>
    </source>
</evidence>
<evidence type="ECO:0000250" key="6">
    <source>
        <dbReference type="UniProtKB" id="Q13224"/>
    </source>
</evidence>
<evidence type="ECO:0000255" key="7"/>
<evidence type="ECO:0000256" key="8">
    <source>
        <dbReference type="SAM" id="MobiDB-lite"/>
    </source>
</evidence>
<evidence type="ECO:0000303" key="9">
    <source ref="1"/>
</evidence>
<evidence type="ECO:0000305" key="10"/>
<protein>
    <recommendedName>
        <fullName evidence="6">Glutamate receptor ionotropic, NMDA 2B</fullName>
        <shortName evidence="6">GluN2B</shortName>
    </recommendedName>
    <alternativeName>
        <fullName>Glutamate [NMDA] receptor subunit epsilon-2</fullName>
    </alternativeName>
    <alternativeName>
        <fullName>N-methyl D-aspartate receptor subtype 2B</fullName>
        <shortName evidence="6">NMDAR2B</shortName>
        <shortName>NR2B</shortName>
    </alternativeName>
</protein>
<keyword id="KW-0106">Calcium</keyword>
<keyword id="KW-1003">Cell membrane</keyword>
<keyword id="KW-0966">Cell projection</keyword>
<keyword id="KW-0963">Cytoplasm</keyword>
<keyword id="KW-0206">Cytoskeleton</keyword>
<keyword id="KW-1015">Disulfide bond</keyword>
<keyword id="KW-0967">Endosome</keyword>
<keyword id="KW-0325">Glycoprotein</keyword>
<keyword id="KW-0407">Ion channel</keyword>
<keyword id="KW-0406">Ion transport</keyword>
<keyword id="KW-1071">Ligand-gated ion channel</keyword>
<keyword id="KW-0458">Lysosome</keyword>
<keyword id="KW-0460">Magnesium</keyword>
<keyword id="KW-0472">Membrane</keyword>
<keyword id="KW-0479">Metal-binding</keyword>
<keyword id="KW-0597">Phosphoprotein</keyword>
<keyword id="KW-0628">Postsynaptic cell membrane</keyword>
<keyword id="KW-0675">Receptor</keyword>
<keyword id="KW-1185">Reference proteome</keyword>
<keyword id="KW-0732">Signal</keyword>
<keyword id="KW-0770">Synapse</keyword>
<keyword id="KW-0812">Transmembrane</keyword>
<keyword id="KW-1133">Transmembrane helix</keyword>
<keyword id="KW-0813">Transport</keyword>
<keyword id="KW-0862">Zinc</keyword>
<organism>
    <name type="scientific">Canis lupus familiaris</name>
    <name type="common">Dog</name>
    <name type="synonym">Canis familiaris</name>
    <dbReference type="NCBI Taxonomy" id="9615"/>
    <lineage>
        <taxon>Eukaryota</taxon>
        <taxon>Metazoa</taxon>
        <taxon>Chordata</taxon>
        <taxon>Craniata</taxon>
        <taxon>Vertebrata</taxon>
        <taxon>Euteleostomi</taxon>
        <taxon>Mammalia</taxon>
        <taxon>Eutheria</taxon>
        <taxon>Laurasiatheria</taxon>
        <taxon>Carnivora</taxon>
        <taxon>Caniformia</taxon>
        <taxon>Canidae</taxon>
        <taxon>Canis</taxon>
    </lineage>
</organism>
<comment type="function">
    <text evidence="3 5 6">Component of N-methyl-D-aspartate (NMDA) receptors (NMDARs) that function as heterotetrameric, ligand-gated cation channels with high calcium permeability and voltage-dependent block by Mg(2+) (By similarity). Participates in synaptic plasticity for learning and memory formation by contributing to the long-term depression (LTD) of hippocampus membrane currents (By similarity). Channel activation requires binding of the neurotransmitter L-glutamate to the GluN2 subunit, glycine or D-serine binding to the GluN1 subunit, plus membrane depolarization to eliminate channel inhibition by Mg(2+) (By similarity). NMDARs mediate simultaneously the potasium efflux and the influx of calcium and sodium (By similarity). Each GluN2 subunit confers differential attributes to channel properties, including activation, deactivation and desensitization kinetics, pH sensitivity, Ca2(+) permeability, and binding to allosteric modulators (By similarity). In concert with DAPK1 at extrasynaptic sites, acts as a central mediator for stroke damage. Its phosphorylation at Ser-1303 by DAPK1 enhances synaptic NMDA receptor channel activity inducing injurious Ca2+ influx through them, resulting in an irreversible neuronal death (By similarity).</text>
</comment>
<comment type="catalytic activity">
    <reaction evidence="6">
        <text>Ca(2+)(in) = Ca(2+)(out)</text>
        <dbReference type="Rhea" id="RHEA:29671"/>
        <dbReference type="ChEBI" id="CHEBI:29108"/>
    </reaction>
</comment>
<comment type="catalytic activity">
    <reaction evidence="6">
        <text>Na(+)(in) = Na(+)(out)</text>
        <dbReference type="Rhea" id="RHEA:34963"/>
        <dbReference type="ChEBI" id="CHEBI:29101"/>
    </reaction>
</comment>
<comment type="catalytic activity">
    <reaction evidence="3">
        <text>K(+)(in) = K(+)(out)</text>
        <dbReference type="Rhea" id="RHEA:29463"/>
        <dbReference type="ChEBI" id="CHEBI:29103"/>
    </reaction>
</comment>
<comment type="subunit">
    <text evidence="4 5 6">Heterotetramer. Forms heterotetrameric channels composed of two GluN1/zeta subunits (GRIN1), and two identical GluN2/epsilon subunits (GRIN2A, GRIN2B, GRIN2C or GRIN2D) or GluN3 subunits (GRIN3A or GRIN3B) (in vitro). Can also form heterotetrameric channels that contain at least two GluN1 subunits and at least two different GluN2 subunits (or a combination of one GluN2 and one GluN3 subunits) (in vitro). In vivo, the subunit composition may depend on the expression levels of the different subunits. Found in a complex with GRIN1, GRIN3A and PPP2CB. Found in a complex with GRIN1 and GRIN3B. Interacts with MAGI3. Interacts with HIP1 and Neto1. Interacts with PDZ domains of PATJ, DLG3 and DLG4. Interacts with DAPK1 (By similarity). Found in a complex with GRIN1 and PRR7. Interacts with PRR7 (By similarity). Interacts with CAMK2A (By similarity). Interacts with ARC; preventing ARC oligomerization (By similarity). Interacts with TMEM25 (By similarity). Interacts (via the extreme C-terminus) with FRMPD2 (via the second PDZ domain); the interaction is direct and is likely to promote NMDAR-mediated neural signal transmission (By similarity). Interacts with FAM81A; the interaction facilitates condensate formation via liquid-liquid phase separation (By similarity).</text>
</comment>
<comment type="subcellular location">
    <subcellularLocation>
        <location evidence="6">Cell membrane</location>
        <topology evidence="6">Multi-pass membrane protein</topology>
    </subcellularLocation>
    <subcellularLocation>
        <location evidence="4">Postsynaptic cell membrane</location>
        <topology evidence="6">Multi-pass membrane protein</topology>
    </subcellularLocation>
    <subcellularLocation>
        <location evidence="6">Cell projection</location>
        <location evidence="6">Dendrite</location>
    </subcellularLocation>
    <subcellularLocation>
        <location evidence="5">Late endosome</location>
    </subcellularLocation>
    <subcellularLocation>
        <location evidence="5">Lysosome</location>
    </subcellularLocation>
    <subcellularLocation>
        <location evidence="5">Cytoplasm</location>
        <location evidence="5">Cytoskeleton</location>
    </subcellularLocation>
    <text evidence="5">Co-localizes with the motor protein KIF17 along microtubules.</text>
</comment>
<comment type="domain">
    <text evidence="4">The extracellular N-terminal domain (ATD/NTD) endows NMDARs with a unique capacity for allosteric modulation, harboring several binding sites for small molecule ligands that act as subunit-specific allosteric modulators of ion channel activity.</text>
</comment>
<comment type="domain">
    <text evidence="4">A hydrophobic region that gives rise to the prediction of a transmembrane span does not cross the membrane, but is part of a discontinuously helical region that dips into the membrane and is probably part of the pore and of the selectivity filter.</text>
</comment>
<comment type="PTM">
    <text evidence="4 5">Phosphorylated on tyrosine residues (By similarity). Phosphorylation at Ser-1303 by DAPK1 enhances synaptic NMDA receptor channel activity (By similarity).</text>
</comment>
<comment type="similarity">
    <text evidence="10">Belongs to the glutamate-gated ion channel (TC 1.A.10.1) family. NR2B/GRIN2B subfamily.</text>
</comment>
<name>NMDE2_CANLF</name>
<sequence>MKPRAECCSPKFWLVLAVLAVSGSRARSQKSPPSIGIAVILVGTSDEVAIKDAHEKDDFHHLSVVPRVELVAMNETDPKSIITRICDLMSDRKIQGVVFADDTDQEAIAQILDFISAQTLTPILGIHGGSSMIMADKDESSMFFQFGPSIEQQASVMLNIMEEYDWYIFSIVTTYFPGYQDFVNKIRSTIENSFVGWELEEVLLLDMSLDDGDSKIQNQLKKLQSPIILLYCTKEEATYIFEVANSVGLTGYGYTWIVPSLVAGDTDTVPSEFPTGLISVSYDEWDYGLPARVRDGIAIITTAASDMLSEHSFIPEPKSSCYNTHEKRIYQSNMLNRYLINVTFEGRNLSFSEDGYQMHPKLVIILLNKERKWERVGKWKDKSLQMKYYVWPRMCPETEEQEDDHLSIVTLEEAPFVIVESVDPLSGTCMRNTVPCQKRIVSENKTDEEPGYIKKCCKGFCIDILKKISKSVKFTYDLYLVTNGKHGKKINGTWNGMIGEVVMKRAYMAVGSLTINEERSEVVDFSVPFIETGISVMVSRSNGTVSPSAFLEPFSADVWVMMFVMLLIVSAVAVFVFEYFSPVGYNRCLADGREPGGPSFTIGKAIWLLWGLVFNNSVPVQNPKGTTSKIMVSVWAFFAVIFLASYTANLAAFMIQEEYVDQVSGLSDKKFQRPNDFSPPFRFGTVPNGSTERNIRNNYAEMHAYMGKFNQRGVDDALLSLKTGKLDAFIYDAAVLNYMAGRDEGCKLVTIGSGKVFASTGYGIAIQKDSGWKRQVDLAILQLFGDGEMEELEALWLTGICHNEKNEVMSSQLDIDNMAGVFYMLGAAMALSLITFICEHLFYWQFRHCFMGVCSGKPGMVFSISRGIYSCIHGVAIEERQSVMNSPTATMNNTHSNILRLLRTAKNMANLSGVNGSPQSALDFIRRESSVYDISEHRRSFTHSDCKSYNNPPCEENLFSDYISEVERTFGNLQLKDSNVYQDHYHHHHRPHSIGSASSIDGLYDCDNPPFTTQPRSISKKPLDLGLPSSKHSQLSDLYGKFSFKSDRYSGHDDLIRSDVSDISTHTVTYGNIEGNAAKRRKQQYKDSLKKRPASAKSRREFDEIELAYRRRPPRSPDHKRYFRDKEGLRDFYLDQFRTKENSPHWEHVDLTDIYKEQSDDFKRDSVSGGGPCTNRSHLKHGAGDKHGVVSGVPAPWEKNLSNVDWEDRSGGNFCRSCPSKLHNYSTAVTGQNSGRQACIRCEACKKAGNLYDISEDNSLQELDQPAAPVAVPSNAPSTKYPQSPTNSKAQKKTRNKLRRQHSYDTFVDLQKEEAALAPRSVSLKDKGRFLDGSPYAHMFETPAGESTFANHESSVAAAGHRHHNNPGGGGYMLSKSLYPDRVTQNPFIPTFGDDQCLLHGSKSYFFRQPTVAGAPKARPDFRALVTNKPVVSALHGAVPGRFQKDICIGNQSNPCVPNNKNPRAFNGSSNGHVYEKLSSIESDV</sequence>
<reference key="1">
    <citation type="submission" date="2004-12" db="EMBL/GenBank/DDBJ databases">
        <title>Canis familiaris glutamate receptor, ionotropic, NMDA2B (Grin2b), mRNA, complete cds.</title>
        <authorList>
            <person name="Taki K."/>
            <person name="Shinjo K."/>
        </authorList>
    </citation>
    <scope>NUCLEOTIDE SEQUENCE [MRNA]</scope>
    <source>
        <tissue>Brain cortex</tissue>
    </source>
</reference>
<dbReference type="EMBL" id="AB195992">
    <property type="protein sequence ID" value="BAD74215.1"/>
    <property type="molecule type" value="mRNA"/>
</dbReference>
<dbReference type="RefSeq" id="NP_001008719.1">
    <property type="nucleotide sequence ID" value="NM_001008719.1"/>
</dbReference>
<dbReference type="RefSeq" id="XP_005636773.1">
    <property type="nucleotide sequence ID" value="XM_005636716.2"/>
</dbReference>
<dbReference type="RefSeq" id="XP_013963742.1">
    <property type="nucleotide sequence ID" value="XM_014108267.1"/>
</dbReference>
<dbReference type="RefSeq" id="XP_013963743.1">
    <property type="nucleotide sequence ID" value="XM_014108268.1"/>
</dbReference>
<dbReference type="SMR" id="Q5R1P3"/>
<dbReference type="FunCoup" id="Q5R1P3">
    <property type="interactions" value="266"/>
</dbReference>
<dbReference type="STRING" id="9615.ENSCAFP00000039796"/>
<dbReference type="GlyCosmos" id="Q5R1P3">
    <property type="glycosylation" value="7 sites, No reported glycans"/>
</dbReference>
<dbReference type="PaxDb" id="9612-ENSCAFP00000019393"/>
<dbReference type="Ensembl" id="ENSCAFT00000044471.4">
    <property type="protein sequence ID" value="ENSCAFP00000039796.2"/>
    <property type="gene ID" value="ENSCAFG00000013148.6"/>
</dbReference>
<dbReference type="Ensembl" id="ENSCAFT00030047919.1">
    <property type="protein sequence ID" value="ENSCAFP00030041923.1"/>
    <property type="gene ID" value="ENSCAFG00030025940.1"/>
</dbReference>
<dbReference type="Ensembl" id="ENSCAFT00040043337.1">
    <property type="protein sequence ID" value="ENSCAFP00040037805.1"/>
    <property type="gene ID" value="ENSCAFG00040023322.1"/>
</dbReference>
<dbReference type="Ensembl" id="ENSCAFT00845040679.1">
    <property type="protein sequence ID" value="ENSCAFP00845031842.1"/>
    <property type="gene ID" value="ENSCAFG00845022981.1"/>
</dbReference>
<dbReference type="GeneID" id="494009"/>
<dbReference type="KEGG" id="cfa:494009"/>
<dbReference type="CTD" id="2904"/>
<dbReference type="VEuPathDB" id="HostDB:ENSCAFG00845022981"/>
<dbReference type="VGNC" id="VGNC:41493">
    <property type="gene designation" value="GRIN2B"/>
</dbReference>
<dbReference type="eggNOG" id="KOG1053">
    <property type="taxonomic scope" value="Eukaryota"/>
</dbReference>
<dbReference type="GeneTree" id="ENSGT00940000155964"/>
<dbReference type="InParanoid" id="Q5R1P3"/>
<dbReference type="OrthoDB" id="5984008at2759"/>
<dbReference type="TreeFam" id="TF314731"/>
<dbReference type="Reactome" id="R-CFA-3928662">
    <property type="pathway name" value="EPHB-mediated forward signaling"/>
</dbReference>
<dbReference type="Reactome" id="R-CFA-438066">
    <property type="pathway name" value="Unblocking of NMDA receptors, glutamate binding and activation"/>
</dbReference>
<dbReference type="Reactome" id="R-CFA-5673001">
    <property type="pathway name" value="RAF/MAP kinase cascade"/>
</dbReference>
<dbReference type="Reactome" id="R-CFA-8849932">
    <property type="pathway name" value="Synaptic adhesion-like molecules"/>
</dbReference>
<dbReference type="Reactome" id="R-CFA-9609736">
    <property type="pathway name" value="Assembly and cell surface presentation of NMDA receptors"/>
</dbReference>
<dbReference type="Proteomes" id="UP000002254">
    <property type="component" value="Chromosome 27"/>
</dbReference>
<dbReference type="Proteomes" id="UP000694429">
    <property type="component" value="Chromosome 27"/>
</dbReference>
<dbReference type="Proteomes" id="UP000694542">
    <property type="component" value="Chromosome 27"/>
</dbReference>
<dbReference type="Proteomes" id="UP000805418">
    <property type="component" value="Chromosome 27"/>
</dbReference>
<dbReference type="Bgee" id="ENSCAFG00000013148">
    <property type="expression patterns" value="Expressed in prefrontal cortex and 9 other cell types or tissues"/>
</dbReference>
<dbReference type="GO" id="GO:0005856">
    <property type="term" value="C:cytoskeleton"/>
    <property type="evidence" value="ECO:0007669"/>
    <property type="project" value="UniProtKB-SubCell"/>
</dbReference>
<dbReference type="GO" id="GO:0030425">
    <property type="term" value="C:dendrite"/>
    <property type="evidence" value="ECO:0007669"/>
    <property type="project" value="UniProtKB-SubCell"/>
</dbReference>
<dbReference type="GO" id="GO:0005770">
    <property type="term" value="C:late endosome"/>
    <property type="evidence" value="ECO:0000250"/>
    <property type="project" value="UniProtKB"/>
</dbReference>
<dbReference type="GO" id="GO:0005764">
    <property type="term" value="C:lysosome"/>
    <property type="evidence" value="ECO:0000250"/>
    <property type="project" value="UniProtKB"/>
</dbReference>
<dbReference type="GO" id="GO:0017146">
    <property type="term" value="C:NMDA selective glutamate receptor complex"/>
    <property type="evidence" value="ECO:0000250"/>
    <property type="project" value="UniProtKB"/>
</dbReference>
<dbReference type="GO" id="GO:0005886">
    <property type="term" value="C:plasma membrane"/>
    <property type="evidence" value="ECO:0000250"/>
    <property type="project" value="UniProtKB"/>
</dbReference>
<dbReference type="GO" id="GO:0014069">
    <property type="term" value="C:postsynaptic density"/>
    <property type="evidence" value="ECO:0000250"/>
    <property type="project" value="UniProtKB"/>
</dbReference>
<dbReference type="GO" id="GO:0098839">
    <property type="term" value="C:postsynaptic density membrane"/>
    <property type="evidence" value="ECO:0000318"/>
    <property type="project" value="GO_Central"/>
</dbReference>
<dbReference type="GO" id="GO:0045211">
    <property type="term" value="C:postsynaptic membrane"/>
    <property type="evidence" value="ECO:0000250"/>
    <property type="project" value="UniProtKB"/>
</dbReference>
<dbReference type="GO" id="GO:0016595">
    <property type="term" value="F:glutamate binding"/>
    <property type="evidence" value="ECO:0000250"/>
    <property type="project" value="UniProtKB"/>
</dbReference>
<dbReference type="GO" id="GO:0022849">
    <property type="term" value="F:glutamate-gated calcium ion channel activity"/>
    <property type="evidence" value="ECO:0000250"/>
    <property type="project" value="UniProtKB"/>
</dbReference>
<dbReference type="GO" id="GO:0004972">
    <property type="term" value="F:NMDA glutamate receptor activity"/>
    <property type="evidence" value="ECO:0000250"/>
    <property type="project" value="UniProtKB"/>
</dbReference>
<dbReference type="GO" id="GO:1904315">
    <property type="term" value="F:transmitter-gated monoatomic ion channel activity involved in regulation of postsynaptic membrane potential"/>
    <property type="evidence" value="ECO:0000318"/>
    <property type="project" value="GO_Central"/>
</dbReference>
<dbReference type="GO" id="GO:0008270">
    <property type="term" value="F:zinc ion binding"/>
    <property type="evidence" value="ECO:0000250"/>
    <property type="project" value="UniProtKB"/>
</dbReference>
<dbReference type="GO" id="GO:0097553">
    <property type="term" value="P:calcium ion transmembrane import into cytosol"/>
    <property type="evidence" value="ECO:0000250"/>
    <property type="project" value="UniProtKB"/>
</dbReference>
<dbReference type="GO" id="GO:0060079">
    <property type="term" value="P:excitatory postsynaptic potential"/>
    <property type="evidence" value="ECO:0000318"/>
    <property type="project" value="GO_Central"/>
</dbReference>
<dbReference type="GO" id="GO:0060291">
    <property type="term" value="P:long-term synaptic potentiation"/>
    <property type="evidence" value="ECO:0000318"/>
    <property type="project" value="GO_Central"/>
</dbReference>
<dbReference type="GO" id="GO:0051290">
    <property type="term" value="P:protein heterotetramerization"/>
    <property type="evidence" value="ECO:0000250"/>
    <property type="project" value="UniProtKB"/>
</dbReference>
<dbReference type="GO" id="GO:0035249">
    <property type="term" value="P:synaptic transmission, glutamatergic"/>
    <property type="evidence" value="ECO:0000318"/>
    <property type="project" value="GO_Central"/>
</dbReference>
<dbReference type="CDD" id="cd06378">
    <property type="entry name" value="PBP1_iGluR_NMDA_NR2"/>
    <property type="match status" value="1"/>
</dbReference>
<dbReference type="CDD" id="cd13718">
    <property type="entry name" value="PBP2_iGluR_NMDA_Nr2"/>
    <property type="match status" value="1"/>
</dbReference>
<dbReference type="FunFam" id="3.40.50.2300:FF:000312">
    <property type="entry name" value="Glutamate ionotropic receptor NMDA type subunit 2B"/>
    <property type="match status" value="1"/>
</dbReference>
<dbReference type="FunFam" id="1.10.287.70:FF:000199">
    <property type="entry name" value="Glutamate receptor ionotropic, NMDA 2B"/>
    <property type="match status" value="1"/>
</dbReference>
<dbReference type="FunFam" id="3.40.50.2300:FF:000020">
    <property type="entry name" value="Glutamate receptor ionotropic, NMDA 2B, putative"/>
    <property type="match status" value="1"/>
</dbReference>
<dbReference type="FunFam" id="3.40.190.10:FF:000007">
    <property type="entry name" value="Putative glutamate receptor ionotropic NMDA 2B"/>
    <property type="match status" value="1"/>
</dbReference>
<dbReference type="FunFam" id="3.40.190.10:FF:000038">
    <property type="entry name" value="Putative glutamate receptor ionotropic NMDA 2B"/>
    <property type="match status" value="1"/>
</dbReference>
<dbReference type="Gene3D" id="3.40.50.2300">
    <property type="match status" value="2"/>
</dbReference>
<dbReference type="Gene3D" id="3.40.190.10">
    <property type="entry name" value="Periplasmic binding protein-like II"/>
    <property type="match status" value="3"/>
</dbReference>
<dbReference type="InterPro" id="IPR001828">
    <property type="entry name" value="ANF_lig-bd_rcpt"/>
</dbReference>
<dbReference type="InterPro" id="IPR019594">
    <property type="entry name" value="Glu/Gly-bd"/>
</dbReference>
<dbReference type="InterPro" id="IPR001508">
    <property type="entry name" value="Iono_Glu_rcpt_met"/>
</dbReference>
<dbReference type="InterPro" id="IPR015683">
    <property type="entry name" value="Ionotropic_Glu_rcpt"/>
</dbReference>
<dbReference type="InterPro" id="IPR001320">
    <property type="entry name" value="Iontro_rcpt_C"/>
</dbReference>
<dbReference type="InterPro" id="IPR018884">
    <property type="entry name" value="NMDAR2_C"/>
</dbReference>
<dbReference type="InterPro" id="IPR028082">
    <property type="entry name" value="Peripla_BP_I"/>
</dbReference>
<dbReference type="PANTHER" id="PTHR18966">
    <property type="entry name" value="IONOTROPIC GLUTAMATE RECEPTOR"/>
    <property type="match status" value="1"/>
</dbReference>
<dbReference type="Pfam" id="PF01094">
    <property type="entry name" value="ANF_receptor"/>
    <property type="match status" value="1"/>
</dbReference>
<dbReference type="Pfam" id="PF00060">
    <property type="entry name" value="Lig_chan"/>
    <property type="match status" value="1"/>
</dbReference>
<dbReference type="Pfam" id="PF10613">
    <property type="entry name" value="Lig_chan-Glu_bd"/>
    <property type="match status" value="1"/>
</dbReference>
<dbReference type="Pfam" id="PF10565">
    <property type="entry name" value="NMDAR2_C"/>
    <property type="match status" value="1"/>
</dbReference>
<dbReference type="PRINTS" id="PR00177">
    <property type="entry name" value="NMDARECEPTOR"/>
</dbReference>
<dbReference type="SMART" id="SM00918">
    <property type="entry name" value="Lig_chan-Glu_bd"/>
    <property type="match status" value="1"/>
</dbReference>
<dbReference type="SMART" id="SM00079">
    <property type="entry name" value="PBPe"/>
    <property type="match status" value="1"/>
</dbReference>
<dbReference type="SUPFAM" id="SSF53822">
    <property type="entry name" value="Periplasmic binding protein-like I"/>
    <property type="match status" value="1"/>
</dbReference>
<dbReference type="SUPFAM" id="SSF53850">
    <property type="entry name" value="Periplasmic binding protein-like II"/>
    <property type="match status" value="1"/>
</dbReference>
<feature type="signal peptide" evidence="7">
    <location>
        <begin position="1"/>
        <end position="26"/>
    </location>
</feature>
<feature type="chain" id="PRO_0000289579" description="Glutamate receptor ionotropic, NMDA 2B">
    <location>
        <begin position="27"/>
        <end position="1485"/>
    </location>
</feature>
<feature type="topological domain" description="Extracellular" evidence="4">
    <location>
        <begin position="27"/>
        <end position="557"/>
    </location>
</feature>
<feature type="transmembrane region" description="Helical" evidence="4">
    <location>
        <begin position="558"/>
        <end position="576"/>
    </location>
</feature>
<feature type="topological domain" description="Cytoplasmic" evidence="4">
    <location>
        <begin position="577"/>
        <end position="603"/>
    </location>
</feature>
<feature type="intramembrane region" description="Discontinuously helical" evidence="4">
    <location>
        <begin position="604"/>
        <end position="623"/>
    </location>
</feature>
<feature type="topological domain" description="Cytoplasmic" evidence="4">
    <location>
        <begin position="624"/>
        <end position="630"/>
    </location>
</feature>
<feature type="transmembrane region" description="Helical" evidence="4">
    <location>
        <begin position="631"/>
        <end position="646"/>
    </location>
</feature>
<feature type="topological domain" description="Extracellular" evidence="4">
    <location>
        <begin position="647"/>
        <end position="817"/>
    </location>
</feature>
<feature type="transmembrane region" description="Helical" evidence="4">
    <location>
        <begin position="818"/>
        <end position="837"/>
    </location>
</feature>
<feature type="topological domain" description="Cytoplasmic" evidence="4">
    <location>
        <begin position="838"/>
        <end position="1485"/>
    </location>
</feature>
<feature type="region of interest" description="Pore-forming" evidence="2">
    <location>
        <begin position="604"/>
        <end position="623"/>
    </location>
</feature>
<feature type="region of interest" description="Disordered" evidence="8">
    <location>
        <begin position="1074"/>
        <end position="1097"/>
    </location>
</feature>
<feature type="region of interest" description="Disordered" evidence="8">
    <location>
        <begin position="1162"/>
        <end position="1194"/>
    </location>
</feature>
<feature type="region of interest" description="Disordered" evidence="8">
    <location>
        <begin position="1269"/>
        <end position="1302"/>
    </location>
</feature>
<feature type="region of interest" description="Interaction with DAPK1" evidence="5">
    <location>
        <begin position="1292"/>
        <end position="1304"/>
    </location>
</feature>
<feature type="short sequence motif" description="PDZ-binding" evidence="1">
    <location>
        <begin position="1483"/>
        <end position="1485"/>
    </location>
</feature>
<feature type="compositionally biased region" description="Low complexity" evidence="8">
    <location>
        <begin position="1269"/>
        <end position="1278"/>
    </location>
</feature>
<feature type="compositionally biased region" description="Polar residues" evidence="8">
    <location>
        <begin position="1280"/>
        <end position="1289"/>
    </location>
</feature>
<feature type="compositionally biased region" description="Basic residues" evidence="8">
    <location>
        <begin position="1290"/>
        <end position="1301"/>
    </location>
</feature>
<feature type="binding site" evidence="4">
    <location>
        <position position="127"/>
    </location>
    <ligand>
        <name>Zn(2+)</name>
        <dbReference type="ChEBI" id="CHEBI:29105"/>
        <label>1</label>
        <note>inhibitor</note>
    </ligand>
</feature>
<feature type="binding site" evidence="4">
    <location>
        <position position="284"/>
    </location>
    <ligand>
        <name>Zn(2+)</name>
        <dbReference type="ChEBI" id="CHEBI:29105"/>
        <label>1</label>
        <note>inhibitor</note>
    </ligand>
</feature>
<feature type="binding site" evidence="4">
    <location>
        <position position="514"/>
    </location>
    <ligand>
        <name>L-glutamate</name>
        <dbReference type="ChEBI" id="CHEBI:29985"/>
    </ligand>
</feature>
<feature type="binding site" evidence="4">
    <location>
        <position position="519"/>
    </location>
    <ligand>
        <name>L-glutamate</name>
        <dbReference type="ChEBI" id="CHEBI:29985"/>
    </ligand>
</feature>
<feature type="binding site" evidence="4">
    <location>
        <begin position="690"/>
        <end position="691"/>
    </location>
    <ligand>
        <name>L-glutamate</name>
        <dbReference type="ChEBI" id="CHEBI:29985"/>
    </ligand>
</feature>
<feature type="binding site" evidence="4">
    <location>
        <position position="732"/>
    </location>
    <ligand>
        <name>L-glutamate</name>
        <dbReference type="ChEBI" id="CHEBI:29985"/>
    </ligand>
</feature>
<feature type="site" description="Functional determinant of NMDA receptors" evidence="1">
    <location>
        <position position="615"/>
    </location>
</feature>
<feature type="modified residue" description="Phosphoserine" evidence="5">
    <location>
        <position position="882"/>
    </location>
</feature>
<feature type="modified residue" description="Phosphoserine" evidence="4">
    <location>
        <position position="886"/>
    </location>
</feature>
<feature type="modified residue" description="Phosphoserine" evidence="5">
    <location>
        <position position="917"/>
    </location>
</feature>
<feature type="modified residue" description="Phosphoserine" evidence="5">
    <location>
        <position position="920"/>
    </location>
</feature>
<feature type="modified residue" description="Phosphotyrosine" evidence="5">
    <location>
        <position position="962"/>
    </location>
</feature>
<feature type="modified residue" description="Phosphotyrosine" evidence="5">
    <location>
        <position position="1039"/>
    </location>
</feature>
<feature type="modified residue" description="Phosphoserine" evidence="5">
    <location>
        <position position="1058"/>
    </location>
</feature>
<feature type="modified residue" description="Phosphoserine" evidence="5">
    <location>
        <position position="1061"/>
    </location>
</feature>
<feature type="modified residue" description="Phosphoserine" evidence="5">
    <location>
        <position position="1064"/>
    </location>
</feature>
<feature type="modified residue" description="Phosphotyrosine" evidence="5">
    <location>
        <position position="1109"/>
    </location>
</feature>
<feature type="modified residue" description="Phosphotyrosine" evidence="5">
    <location>
        <position position="1133"/>
    </location>
</feature>
<feature type="modified residue" description="Phosphoserine" evidence="5">
    <location>
        <position position="1143"/>
    </location>
</feature>
<feature type="modified residue" description="Phosphotyrosine" evidence="5">
    <location>
        <position position="1155"/>
    </location>
</feature>
<feature type="modified residue" description="Phosphoserine" evidence="5">
    <location>
        <position position="1255"/>
    </location>
</feature>
<feature type="modified residue" description="Phosphoserine" evidence="5">
    <location>
        <position position="1259"/>
    </location>
</feature>
<feature type="modified residue" description="Phosphoserine; by DAPK1" evidence="5">
    <location>
        <position position="1303"/>
    </location>
</feature>
<feature type="modified residue" description="Phosphotyrosine" evidence="5">
    <location>
        <position position="1475"/>
    </location>
</feature>
<feature type="glycosylation site" description="N-linked (GlcNAc...) asparagine" evidence="7">
    <location>
        <position position="74"/>
    </location>
</feature>
<feature type="glycosylation site" description="N-linked (GlcNAc...) asparagine" evidence="7">
    <location>
        <position position="341"/>
    </location>
</feature>
<feature type="glycosylation site" description="N-linked (GlcNAc...) asparagine" evidence="7">
    <location>
        <position position="348"/>
    </location>
</feature>
<feature type="glycosylation site" description="N-linked (GlcNAc...) asparagine" evidence="7">
    <location>
        <position position="444"/>
    </location>
</feature>
<feature type="glycosylation site" description="N-linked (GlcNAc...) asparagine" evidence="7">
    <location>
        <position position="491"/>
    </location>
</feature>
<feature type="glycosylation site" description="N-linked (GlcNAc...) asparagine" evidence="7">
    <location>
        <position position="542"/>
    </location>
</feature>
<feature type="glycosylation site" description="N-linked (GlcNAc...) asparagine" evidence="7">
    <location>
        <position position="688"/>
    </location>
</feature>
<feature type="disulfide bond" evidence="4">
    <location>
        <begin position="86"/>
        <end position="321"/>
    </location>
</feature>
<feature type="disulfide bond" evidence="4">
    <location>
        <begin position="429"/>
        <end position="456"/>
    </location>
</feature>
<feature type="disulfide bond" evidence="4">
    <location>
        <begin position="436"/>
        <end position="457"/>
    </location>
</feature>
<feature type="disulfide bond" evidence="4">
    <location>
        <begin position="746"/>
        <end position="801"/>
    </location>
</feature>
<proteinExistence type="evidence at transcript level"/>
<gene>
    <name evidence="9" type="primary">GRIN2B</name>
    <name evidence="9" type="synonym">NMDA2B</name>
</gene>
<accession>Q5R1P3</accession>